<proteinExistence type="inferred from homology"/>
<dbReference type="EMBL" id="AE014074">
    <property type="protein sequence ID" value="AAM80376.1"/>
    <property type="molecule type" value="Genomic_DNA"/>
</dbReference>
<dbReference type="RefSeq" id="WP_002991299.1">
    <property type="nucleotide sequence ID" value="NC_004070.1"/>
</dbReference>
<dbReference type="SMR" id="P0DA48"/>
<dbReference type="KEGG" id="spg:SpyM3_1769"/>
<dbReference type="HOGENOM" id="CLU_117621_6_1_9"/>
<dbReference type="Proteomes" id="UP000000564">
    <property type="component" value="Chromosome"/>
</dbReference>
<dbReference type="GO" id="GO:0005737">
    <property type="term" value="C:cytoplasm"/>
    <property type="evidence" value="ECO:0007669"/>
    <property type="project" value="UniProtKB-SubCell"/>
</dbReference>
<dbReference type="GO" id="GO:0003677">
    <property type="term" value="F:DNA binding"/>
    <property type="evidence" value="ECO:0007669"/>
    <property type="project" value="UniProtKB-KW"/>
</dbReference>
<dbReference type="CDD" id="cd04458">
    <property type="entry name" value="CSP_CDS"/>
    <property type="match status" value="1"/>
</dbReference>
<dbReference type="FunFam" id="2.40.50.140:FF:000006">
    <property type="entry name" value="Cold shock protein CspC"/>
    <property type="match status" value="1"/>
</dbReference>
<dbReference type="Gene3D" id="6.20.370.130">
    <property type="match status" value="1"/>
</dbReference>
<dbReference type="Gene3D" id="2.40.50.140">
    <property type="entry name" value="Nucleic acid-binding proteins"/>
    <property type="match status" value="1"/>
</dbReference>
<dbReference type="InterPro" id="IPR012156">
    <property type="entry name" value="Cold_shock_CspA"/>
</dbReference>
<dbReference type="InterPro" id="IPR050181">
    <property type="entry name" value="Cold_shock_domain"/>
</dbReference>
<dbReference type="InterPro" id="IPR011129">
    <property type="entry name" value="CSD"/>
</dbReference>
<dbReference type="InterPro" id="IPR019844">
    <property type="entry name" value="CSD_CS"/>
</dbReference>
<dbReference type="InterPro" id="IPR002059">
    <property type="entry name" value="CSP_DNA-bd"/>
</dbReference>
<dbReference type="InterPro" id="IPR012340">
    <property type="entry name" value="NA-bd_OB-fold"/>
</dbReference>
<dbReference type="PANTHER" id="PTHR11544">
    <property type="entry name" value="COLD SHOCK DOMAIN CONTAINING PROTEINS"/>
    <property type="match status" value="1"/>
</dbReference>
<dbReference type="Pfam" id="PF00313">
    <property type="entry name" value="CSD"/>
    <property type="match status" value="1"/>
</dbReference>
<dbReference type="PIRSF" id="PIRSF002599">
    <property type="entry name" value="Cold_shock_A"/>
    <property type="match status" value="1"/>
</dbReference>
<dbReference type="PRINTS" id="PR00050">
    <property type="entry name" value="COLDSHOCK"/>
</dbReference>
<dbReference type="SMART" id="SM00357">
    <property type="entry name" value="CSP"/>
    <property type="match status" value="1"/>
</dbReference>
<dbReference type="SUPFAM" id="SSF50249">
    <property type="entry name" value="Nucleic acid-binding proteins"/>
    <property type="match status" value="1"/>
</dbReference>
<dbReference type="PROSITE" id="PS00352">
    <property type="entry name" value="CSD_1"/>
    <property type="match status" value="1"/>
</dbReference>
<dbReference type="PROSITE" id="PS51857">
    <property type="entry name" value="CSD_2"/>
    <property type="match status" value="1"/>
</dbReference>
<protein>
    <recommendedName>
        <fullName>Major cold shock protein</fullName>
    </recommendedName>
</protein>
<evidence type="ECO:0000250" key="1"/>
<gene>
    <name type="primary">cspA</name>
    <name type="synonym">csp</name>
    <name type="synonym">cspC</name>
    <name type="ordered locus">SpyM3_1769</name>
</gene>
<accession>P0DA48</accession>
<accession>P0A360</accession>
<accession>Q54974</accession>
<feature type="chain" id="PRO_0000100335" description="Major cold shock protein">
    <location>
        <begin position="1"/>
        <end position="67"/>
    </location>
</feature>
<feature type="domain" description="CSD">
    <location>
        <begin position="4"/>
        <end position="63"/>
    </location>
</feature>
<sequence length="67" mass="7322">MAQGTVKWFNAEKGFGFISTENGQDVFAHFSAIQTNGFKTLEEGQKVAFDVEEGQRGPQAVNITKLA</sequence>
<organism>
    <name type="scientific">Streptococcus pyogenes serotype M3 (strain ATCC BAA-595 / MGAS315)</name>
    <dbReference type="NCBI Taxonomy" id="198466"/>
    <lineage>
        <taxon>Bacteria</taxon>
        <taxon>Bacillati</taxon>
        <taxon>Bacillota</taxon>
        <taxon>Bacilli</taxon>
        <taxon>Lactobacillales</taxon>
        <taxon>Streptococcaceae</taxon>
        <taxon>Streptococcus</taxon>
    </lineage>
</organism>
<keyword id="KW-0010">Activator</keyword>
<keyword id="KW-0963">Cytoplasm</keyword>
<keyword id="KW-0238">DNA-binding</keyword>
<keyword id="KW-0346">Stress response</keyword>
<keyword id="KW-0804">Transcription</keyword>
<keyword id="KW-0805">Transcription regulation</keyword>
<reference key="1">
    <citation type="journal article" date="2002" name="Proc. Natl. Acad. Sci. U.S.A.">
        <title>Genome sequence of a serotype M3 strain of group A Streptococcus: phage-encoded toxins, the high-virulence phenotype, and clone emergence.</title>
        <authorList>
            <person name="Beres S.B."/>
            <person name="Sylva G.L."/>
            <person name="Barbian K.D."/>
            <person name="Lei B."/>
            <person name="Hoff J.S."/>
            <person name="Mammarella N.D."/>
            <person name="Liu M.-Y."/>
            <person name="Smoot J.C."/>
            <person name="Porcella S.F."/>
            <person name="Parkins L.D."/>
            <person name="Campbell D.S."/>
            <person name="Smith T.M."/>
            <person name="McCormick J.K."/>
            <person name="Leung D.Y.M."/>
            <person name="Schlievert P.M."/>
            <person name="Musser J.M."/>
        </authorList>
    </citation>
    <scope>NUCLEOTIDE SEQUENCE [LARGE SCALE GENOMIC DNA]</scope>
    <source>
        <strain>ATCC BAA-595 / MGAS315</strain>
    </source>
</reference>
<comment type="subunit">
    <text evidence="1">Homodimer.</text>
</comment>
<comment type="subcellular location">
    <subcellularLocation>
        <location evidence="1">Cytoplasm</location>
    </subcellularLocation>
</comment>
<comment type="induction">
    <text evidence="1">In response to low temperature.</text>
</comment>
<name>CSPA_STRP3</name>